<dbReference type="EMBL" id="X74728">
    <property type="protein sequence ID" value="CAA52741.1"/>
    <property type="molecule type" value="mRNA"/>
</dbReference>
<dbReference type="PIR" id="S62693">
    <property type="entry name" value="S62693"/>
</dbReference>
<dbReference type="RefSeq" id="NP_001075868.1">
    <property type="nucleotide sequence ID" value="NM_001082399.1"/>
</dbReference>
<dbReference type="BMRB" id="P34826"/>
<dbReference type="SMR" id="P34826"/>
<dbReference type="FunCoup" id="P34826">
    <property type="interactions" value="2238"/>
</dbReference>
<dbReference type="STRING" id="9986.ENSOCUP00000019358"/>
<dbReference type="iPTMnet" id="P34826"/>
<dbReference type="PaxDb" id="9986-ENSOCUP00000019358"/>
<dbReference type="GeneID" id="100009286"/>
<dbReference type="KEGG" id="ocu:100009286"/>
<dbReference type="CTD" id="1933"/>
<dbReference type="eggNOG" id="KOG1668">
    <property type="taxonomic scope" value="Eukaryota"/>
</dbReference>
<dbReference type="InParanoid" id="P34826"/>
<dbReference type="OrthoDB" id="331763at2759"/>
<dbReference type="Proteomes" id="UP000001811">
    <property type="component" value="Unplaced"/>
</dbReference>
<dbReference type="GO" id="GO:0005829">
    <property type="term" value="C:cytosol"/>
    <property type="evidence" value="ECO:0007669"/>
    <property type="project" value="TreeGrafter"/>
</dbReference>
<dbReference type="GO" id="GO:0005853">
    <property type="term" value="C:eukaryotic translation elongation factor 1 complex"/>
    <property type="evidence" value="ECO:0007669"/>
    <property type="project" value="InterPro"/>
</dbReference>
<dbReference type="GO" id="GO:0005085">
    <property type="term" value="F:guanyl-nucleotide exchange factor activity"/>
    <property type="evidence" value="ECO:0007669"/>
    <property type="project" value="TreeGrafter"/>
</dbReference>
<dbReference type="GO" id="GO:0003746">
    <property type="term" value="F:translation elongation factor activity"/>
    <property type="evidence" value="ECO:0007669"/>
    <property type="project" value="UniProtKB-KW"/>
</dbReference>
<dbReference type="CDD" id="cd00292">
    <property type="entry name" value="EF1B"/>
    <property type="match status" value="1"/>
</dbReference>
<dbReference type="CDD" id="cd10308">
    <property type="entry name" value="GST_C_eEF1b_like"/>
    <property type="match status" value="1"/>
</dbReference>
<dbReference type="FunFam" id="3.30.70.60:FF:000001">
    <property type="entry name" value="Elongation factor 1-beta 1 like"/>
    <property type="match status" value="1"/>
</dbReference>
<dbReference type="FunFam" id="1.20.1050.130:FF:000001">
    <property type="entry name" value="Putative Elongation factor 1-beta"/>
    <property type="match status" value="1"/>
</dbReference>
<dbReference type="Gene3D" id="1.20.1050.130">
    <property type="match status" value="1"/>
</dbReference>
<dbReference type="Gene3D" id="3.30.70.60">
    <property type="match status" value="1"/>
</dbReference>
<dbReference type="InterPro" id="IPR036219">
    <property type="entry name" value="eEF-1beta-like_sf"/>
</dbReference>
<dbReference type="InterPro" id="IPR018940">
    <property type="entry name" value="EF-1_beta_acid_region_euk"/>
</dbReference>
<dbReference type="InterPro" id="IPR049720">
    <property type="entry name" value="EF1B_bsu/dsu"/>
</dbReference>
<dbReference type="InterPro" id="IPR014038">
    <property type="entry name" value="EF1B_bsu/dsu_GNE"/>
</dbReference>
<dbReference type="InterPro" id="IPR036282">
    <property type="entry name" value="Glutathione-S-Trfase_C_sf"/>
</dbReference>
<dbReference type="InterPro" id="IPR014717">
    <property type="entry name" value="Transl_elong_EF1B/ribsomal_bS6"/>
</dbReference>
<dbReference type="InterPro" id="IPR001326">
    <property type="entry name" value="Transl_elong_EF1B_B/D_CS"/>
</dbReference>
<dbReference type="PANTHER" id="PTHR11595">
    <property type="entry name" value="EF-HAND AND COILED-COIL DOMAIN-CONTAINING FAMILY MEMBER"/>
    <property type="match status" value="1"/>
</dbReference>
<dbReference type="PANTHER" id="PTHR11595:SF21">
    <property type="entry name" value="ELONGATION FACTOR 1-BETA"/>
    <property type="match status" value="1"/>
</dbReference>
<dbReference type="Pfam" id="PF10587">
    <property type="entry name" value="EF-1_beta_acid"/>
    <property type="match status" value="1"/>
</dbReference>
<dbReference type="Pfam" id="PF00736">
    <property type="entry name" value="EF1_GNE"/>
    <property type="match status" value="1"/>
</dbReference>
<dbReference type="SMART" id="SM01182">
    <property type="entry name" value="EF-1_beta_acid"/>
    <property type="match status" value="1"/>
</dbReference>
<dbReference type="SMART" id="SM00888">
    <property type="entry name" value="EF1_GNE"/>
    <property type="match status" value="1"/>
</dbReference>
<dbReference type="SUPFAM" id="SSF54984">
    <property type="entry name" value="eEF-1beta-like"/>
    <property type="match status" value="1"/>
</dbReference>
<dbReference type="SUPFAM" id="SSF47616">
    <property type="entry name" value="GST C-terminal domain-like"/>
    <property type="match status" value="1"/>
</dbReference>
<dbReference type="PROSITE" id="PS00824">
    <property type="entry name" value="EF1BD_1"/>
    <property type="match status" value="1"/>
</dbReference>
<dbReference type="PROSITE" id="PS00825">
    <property type="entry name" value="EF1BD_2"/>
    <property type="match status" value="1"/>
</dbReference>
<sequence>MGFGDLKSPAGLQVLNDYLADKSYIEGYVPSQADVAVFEAVSGPPPADLCHALRWYNHIKSYEKEKASLPGIKKALGTYGPADVEDTTGSGATDSKDDDDIDLFGSDDEEESEEAKRLREERLAQYESKKAKKPALVAKSSILLDVKPWDDETDMVKLEECVRSIQADGLVWGSSKLVPVGYGIKKLQIQCVVEDDKVGTDMLEEQITAFEDYVQSMDVAAFNKI</sequence>
<name>EF1B_RABIT</name>
<proteinExistence type="evidence at protein level"/>
<evidence type="ECO:0000250" key="1">
    <source>
        <dbReference type="UniProtKB" id="A6IPG1"/>
    </source>
</evidence>
<evidence type="ECO:0000250" key="2">
    <source>
        <dbReference type="UniProtKB" id="O70251"/>
    </source>
</evidence>
<evidence type="ECO:0000250" key="3">
    <source>
        <dbReference type="UniProtKB" id="P24534"/>
    </source>
</evidence>
<evidence type="ECO:0000250" key="4">
    <source>
        <dbReference type="UniProtKB" id="P32471"/>
    </source>
</evidence>
<evidence type="ECO:0000256" key="5">
    <source>
        <dbReference type="SAM" id="MobiDB-lite"/>
    </source>
</evidence>
<evidence type="ECO:0000269" key="6">
    <source>
    </source>
</evidence>
<evidence type="ECO:0000305" key="7"/>
<keyword id="KW-0007">Acetylation</keyword>
<keyword id="KW-0251">Elongation factor</keyword>
<keyword id="KW-1017">Isopeptide bond</keyword>
<keyword id="KW-0597">Phosphoprotein</keyword>
<keyword id="KW-0648">Protein biosynthesis</keyword>
<keyword id="KW-1185">Reference proteome</keyword>
<keyword id="KW-0832">Ubl conjugation</keyword>
<gene>
    <name type="primary">EEF1B</name>
    <name type="synonym">EF1B</name>
</gene>
<protein>
    <recommendedName>
        <fullName>Elongation factor 1-beta</fullName>
        <shortName>EF-1-beta</shortName>
    </recommendedName>
    <alternativeName>
        <fullName evidence="7">eEF-1B alpha</fullName>
    </alternativeName>
</protein>
<feature type="chain" id="PRO_0000155023" description="Elongation factor 1-beta">
    <location>
        <begin position="1"/>
        <end position="225"/>
    </location>
</feature>
<feature type="domain" description="GST C-terminal">
    <location>
        <begin position="2"/>
        <end position="84"/>
    </location>
</feature>
<feature type="region of interest" description="Disordered" evidence="5">
    <location>
        <begin position="80"/>
        <end position="114"/>
    </location>
</feature>
<feature type="compositionally biased region" description="Acidic residues" evidence="5">
    <location>
        <begin position="96"/>
        <end position="113"/>
    </location>
</feature>
<feature type="modified residue" description="N6-acetyllysine" evidence="3">
    <location>
        <position position="7"/>
    </location>
</feature>
<feature type="modified residue" description="Phosphoserine" evidence="3">
    <location>
        <position position="8"/>
    </location>
</feature>
<feature type="modified residue" description="Phosphoserine" evidence="3">
    <location>
        <position position="42"/>
    </location>
</feature>
<feature type="modified residue" description="Phosphothreonine" evidence="2">
    <location>
        <position position="88"/>
    </location>
</feature>
<feature type="modified residue" description="Phosphothreonine" evidence="3">
    <location>
        <position position="93"/>
    </location>
</feature>
<feature type="modified residue" description="Phosphoserine" evidence="3">
    <location>
        <position position="95"/>
    </location>
</feature>
<feature type="modified residue" description="Phosphoserine; by CK2" evidence="6">
    <location>
        <position position="106"/>
    </location>
</feature>
<feature type="modified residue" description="Phosphoserine" evidence="3">
    <location>
        <position position="174"/>
    </location>
</feature>
<feature type="cross-link" description="Glycyl lysine isopeptide (Lys-Gly) (interchain with G-Cter in SUMO2)" evidence="3">
    <location>
        <position position="147"/>
    </location>
</feature>
<reference key="1">
    <citation type="journal article" date="1995" name="Biochim. Biophys. Acta">
        <title>Expression of recombinant elongation factor 1 beta from rabbit in Escherichia coli. Phosphorylation by casein kinase II.</title>
        <authorList>
            <person name="Chen C.J."/>
            <person name="Traugh J.A."/>
        </authorList>
    </citation>
    <scope>NUCLEOTIDE SEQUENCE [MRNA]</scope>
    <scope>PHOSPHORYLATION AT SER-106</scope>
    <source>
        <strain>New Zealand white</strain>
    </source>
</reference>
<comment type="function">
    <text evidence="4">Catalytic subunit of the guanine nucleotide exchange factor (GEF) (eEF1B subcomplex) of the eukaryotic elongation factor 1 complex (eEF1). Stimulates the exchange of GDP for GTP on elongation factor 1A (eEF1A), probably by displacing GDP from the nucleotide binding pocket in eEF1A.</text>
</comment>
<comment type="subunit">
    <text evidence="1 7">EF-1 is composed of 4 subunits: alpha, beta (alpha subunit of the eEF1B subcomplex), delta (beta subunit of the eEF1B subcomplex), and gamma (gamma subunit of the eEF1B subcomplex) (Probable). Interacts with elongation factor EEF1A1 (By similarity).</text>
</comment>
<comment type="PTM">
    <text evidence="6">Phosphorylation affects the GDP/GTP exchange rate.</text>
</comment>
<comment type="similarity">
    <text evidence="7">Belongs to the EF-1-beta/EF-1-delta family.</text>
</comment>
<organism>
    <name type="scientific">Oryctolagus cuniculus</name>
    <name type="common">Rabbit</name>
    <dbReference type="NCBI Taxonomy" id="9986"/>
    <lineage>
        <taxon>Eukaryota</taxon>
        <taxon>Metazoa</taxon>
        <taxon>Chordata</taxon>
        <taxon>Craniata</taxon>
        <taxon>Vertebrata</taxon>
        <taxon>Euteleostomi</taxon>
        <taxon>Mammalia</taxon>
        <taxon>Eutheria</taxon>
        <taxon>Euarchontoglires</taxon>
        <taxon>Glires</taxon>
        <taxon>Lagomorpha</taxon>
        <taxon>Leporidae</taxon>
        <taxon>Oryctolagus</taxon>
    </lineage>
</organism>
<accession>P34826</accession>